<accession>A5UMC1</accession>
<organism>
    <name type="scientific">Methanobrevibacter smithii (strain ATCC 35061 / DSM 861 / OCM 144 / PS)</name>
    <dbReference type="NCBI Taxonomy" id="420247"/>
    <lineage>
        <taxon>Archaea</taxon>
        <taxon>Methanobacteriati</taxon>
        <taxon>Methanobacteriota</taxon>
        <taxon>Methanomada group</taxon>
        <taxon>Methanobacteria</taxon>
        <taxon>Methanobacteriales</taxon>
        <taxon>Methanobacteriaceae</taxon>
        <taxon>Methanobrevibacter</taxon>
    </lineage>
</organism>
<protein>
    <recommendedName>
        <fullName evidence="1">Anthranilate phosphoribosyltransferase</fullName>
        <ecNumber evidence="1">2.4.2.18</ecNumber>
    </recommendedName>
</protein>
<reference key="1">
    <citation type="journal article" date="2007" name="Proc. Natl. Acad. Sci. U.S.A.">
        <title>Genomic and metabolic adaptations of Methanobrevibacter smithii to the human gut.</title>
        <authorList>
            <person name="Samuel B.S."/>
            <person name="Hansen E.E."/>
            <person name="Manchester J.K."/>
            <person name="Coutinho P.M."/>
            <person name="Henrissat B."/>
            <person name="Fulton R."/>
            <person name="Latreille P."/>
            <person name="Kim K."/>
            <person name="Wilson R.K."/>
            <person name="Gordon J.I."/>
        </authorList>
    </citation>
    <scope>NUCLEOTIDE SEQUENCE [LARGE SCALE GENOMIC DNA]</scope>
    <source>
        <strain>ATCC 35061 / DSM 861 / OCM 144 / PS</strain>
    </source>
</reference>
<proteinExistence type="inferred from homology"/>
<dbReference type="EC" id="2.4.2.18" evidence="1"/>
<dbReference type="EMBL" id="CP000678">
    <property type="protein sequence ID" value="ABQ87349.1"/>
    <property type="molecule type" value="Genomic_DNA"/>
</dbReference>
<dbReference type="RefSeq" id="WP_011954313.1">
    <property type="nucleotide sequence ID" value="NZ_CP117965.1"/>
</dbReference>
<dbReference type="SMR" id="A5UMC1"/>
<dbReference type="STRING" id="420247.Msm_1144"/>
<dbReference type="EnsemblBacteria" id="ABQ87349">
    <property type="protein sequence ID" value="ABQ87349"/>
    <property type="gene ID" value="Msm_1144"/>
</dbReference>
<dbReference type="GeneID" id="78817794"/>
<dbReference type="KEGG" id="msi:Msm_1144"/>
<dbReference type="PATRIC" id="fig|420247.28.peg.1143"/>
<dbReference type="eggNOG" id="arCOG02012">
    <property type="taxonomic scope" value="Archaea"/>
</dbReference>
<dbReference type="HOGENOM" id="CLU_034315_2_1_2"/>
<dbReference type="UniPathway" id="UPA00035">
    <property type="reaction ID" value="UER00041"/>
</dbReference>
<dbReference type="Proteomes" id="UP000001992">
    <property type="component" value="Chromosome"/>
</dbReference>
<dbReference type="GO" id="GO:0005829">
    <property type="term" value="C:cytosol"/>
    <property type="evidence" value="ECO:0007669"/>
    <property type="project" value="TreeGrafter"/>
</dbReference>
<dbReference type="GO" id="GO:0004048">
    <property type="term" value="F:anthranilate phosphoribosyltransferase activity"/>
    <property type="evidence" value="ECO:0007669"/>
    <property type="project" value="UniProtKB-UniRule"/>
</dbReference>
<dbReference type="GO" id="GO:0000287">
    <property type="term" value="F:magnesium ion binding"/>
    <property type="evidence" value="ECO:0007669"/>
    <property type="project" value="UniProtKB-UniRule"/>
</dbReference>
<dbReference type="GO" id="GO:0000162">
    <property type="term" value="P:L-tryptophan biosynthetic process"/>
    <property type="evidence" value="ECO:0007669"/>
    <property type="project" value="UniProtKB-UniRule"/>
</dbReference>
<dbReference type="FunFam" id="3.40.1030.10:FF:000002">
    <property type="entry name" value="Anthranilate phosphoribosyltransferase"/>
    <property type="match status" value="1"/>
</dbReference>
<dbReference type="Gene3D" id="3.40.1030.10">
    <property type="entry name" value="Nucleoside phosphorylase/phosphoribosyltransferase catalytic domain"/>
    <property type="match status" value="1"/>
</dbReference>
<dbReference type="Gene3D" id="1.20.970.10">
    <property type="entry name" value="Transferase, Pyrimidine Nucleoside Phosphorylase, Chain C"/>
    <property type="match status" value="1"/>
</dbReference>
<dbReference type="HAMAP" id="MF_00211">
    <property type="entry name" value="TrpD"/>
    <property type="match status" value="1"/>
</dbReference>
<dbReference type="InterPro" id="IPR005940">
    <property type="entry name" value="Anthranilate_Pribosyl_Tfrase"/>
</dbReference>
<dbReference type="InterPro" id="IPR000312">
    <property type="entry name" value="Glycosyl_Trfase_fam3"/>
</dbReference>
<dbReference type="InterPro" id="IPR017459">
    <property type="entry name" value="Glycosyl_Trfase_fam3_N_dom"/>
</dbReference>
<dbReference type="InterPro" id="IPR036320">
    <property type="entry name" value="Glycosyl_Trfase_fam3_N_dom_sf"/>
</dbReference>
<dbReference type="InterPro" id="IPR035902">
    <property type="entry name" value="Nuc_phospho_transferase"/>
</dbReference>
<dbReference type="NCBIfam" id="TIGR01245">
    <property type="entry name" value="trpD"/>
    <property type="match status" value="1"/>
</dbReference>
<dbReference type="PANTHER" id="PTHR43285">
    <property type="entry name" value="ANTHRANILATE PHOSPHORIBOSYLTRANSFERASE"/>
    <property type="match status" value="1"/>
</dbReference>
<dbReference type="PANTHER" id="PTHR43285:SF2">
    <property type="entry name" value="ANTHRANILATE PHOSPHORIBOSYLTRANSFERASE"/>
    <property type="match status" value="1"/>
</dbReference>
<dbReference type="Pfam" id="PF02885">
    <property type="entry name" value="Glycos_trans_3N"/>
    <property type="match status" value="1"/>
</dbReference>
<dbReference type="Pfam" id="PF00591">
    <property type="entry name" value="Glycos_transf_3"/>
    <property type="match status" value="1"/>
</dbReference>
<dbReference type="SUPFAM" id="SSF52418">
    <property type="entry name" value="Nucleoside phosphorylase/phosphoribosyltransferase catalytic domain"/>
    <property type="match status" value="1"/>
</dbReference>
<dbReference type="SUPFAM" id="SSF47648">
    <property type="entry name" value="Nucleoside phosphorylase/phosphoribosyltransferase N-terminal domain"/>
    <property type="match status" value="1"/>
</dbReference>
<evidence type="ECO:0000255" key="1">
    <source>
        <dbReference type="HAMAP-Rule" id="MF_00211"/>
    </source>
</evidence>
<sequence>MIKEAILKVVNGNDLNAKEAYGAMDEIMSGESSEVQMSAYLTALSMKGETIEEITASTKAMRAHCVKLLNDEEVLEIVGTGGDGSNTFNISTTSSIVISAAGVPVAKHGNRSASSKCGAADVLEALGVNIYIEPEKSLKILKEINLCFLFAQNYHLAMKFVAGVRKELSIRTIFNILGPLTNPAGATMQVLGVYDESLVKPLCEVLKNVGVKSALSVYGQDGLDEISVSDKTSVCELRDGRLKCYEIAPEDFGMERCSKEDLVGGNPRENAEITLSILNGQKGPKRNAVVLNSAAALYVAGKADSIEDGVRLASEIIDSGRAKKQLEKFIEYTNS</sequence>
<comment type="function">
    <text evidence="1">Catalyzes the transfer of the phosphoribosyl group of 5-phosphorylribose-1-pyrophosphate (PRPP) to anthranilate to yield N-(5'-phosphoribosyl)-anthranilate (PRA).</text>
</comment>
<comment type="catalytic activity">
    <reaction evidence="1">
        <text>N-(5-phospho-beta-D-ribosyl)anthranilate + diphosphate = 5-phospho-alpha-D-ribose 1-diphosphate + anthranilate</text>
        <dbReference type="Rhea" id="RHEA:11768"/>
        <dbReference type="ChEBI" id="CHEBI:16567"/>
        <dbReference type="ChEBI" id="CHEBI:18277"/>
        <dbReference type="ChEBI" id="CHEBI:33019"/>
        <dbReference type="ChEBI" id="CHEBI:58017"/>
        <dbReference type="EC" id="2.4.2.18"/>
    </reaction>
</comment>
<comment type="cofactor">
    <cofactor evidence="1">
        <name>Mg(2+)</name>
        <dbReference type="ChEBI" id="CHEBI:18420"/>
    </cofactor>
    <text evidence="1">Binds 2 magnesium ions per monomer.</text>
</comment>
<comment type="pathway">
    <text evidence="1">Amino-acid biosynthesis; L-tryptophan biosynthesis; L-tryptophan from chorismate: step 2/5.</text>
</comment>
<comment type="subunit">
    <text evidence="1">Homodimer.</text>
</comment>
<comment type="similarity">
    <text evidence="1">Belongs to the anthranilate phosphoribosyltransferase family.</text>
</comment>
<feature type="chain" id="PRO_1000043033" description="Anthranilate phosphoribosyltransferase">
    <location>
        <begin position="1"/>
        <end position="335"/>
    </location>
</feature>
<feature type="binding site" evidence="1">
    <location>
        <position position="79"/>
    </location>
    <ligand>
        <name>5-phospho-alpha-D-ribose 1-diphosphate</name>
        <dbReference type="ChEBI" id="CHEBI:58017"/>
    </ligand>
</feature>
<feature type="binding site" evidence="1">
    <location>
        <position position="79"/>
    </location>
    <ligand>
        <name>anthranilate</name>
        <dbReference type="ChEBI" id="CHEBI:16567"/>
        <label>1</label>
    </ligand>
</feature>
<feature type="binding site" evidence="1">
    <location>
        <begin position="82"/>
        <end position="83"/>
    </location>
    <ligand>
        <name>5-phospho-alpha-D-ribose 1-diphosphate</name>
        <dbReference type="ChEBI" id="CHEBI:58017"/>
    </ligand>
</feature>
<feature type="binding site" evidence="1">
    <location>
        <position position="87"/>
    </location>
    <ligand>
        <name>5-phospho-alpha-D-ribose 1-diphosphate</name>
        <dbReference type="ChEBI" id="CHEBI:58017"/>
    </ligand>
</feature>
<feature type="binding site" evidence="1">
    <location>
        <begin position="89"/>
        <end position="92"/>
    </location>
    <ligand>
        <name>5-phospho-alpha-D-ribose 1-diphosphate</name>
        <dbReference type="ChEBI" id="CHEBI:58017"/>
    </ligand>
</feature>
<feature type="binding site" evidence="1">
    <location>
        <position position="91"/>
    </location>
    <ligand>
        <name>Mg(2+)</name>
        <dbReference type="ChEBI" id="CHEBI:18420"/>
        <label>1</label>
    </ligand>
</feature>
<feature type="binding site" evidence="1">
    <location>
        <begin position="107"/>
        <end position="115"/>
    </location>
    <ligand>
        <name>5-phospho-alpha-D-ribose 1-diphosphate</name>
        <dbReference type="ChEBI" id="CHEBI:58017"/>
    </ligand>
</feature>
<feature type="binding site" evidence="1">
    <location>
        <position position="110"/>
    </location>
    <ligand>
        <name>anthranilate</name>
        <dbReference type="ChEBI" id="CHEBI:16567"/>
        <label>1</label>
    </ligand>
</feature>
<feature type="binding site" evidence="1">
    <location>
        <position position="119"/>
    </location>
    <ligand>
        <name>5-phospho-alpha-D-ribose 1-diphosphate</name>
        <dbReference type="ChEBI" id="CHEBI:58017"/>
    </ligand>
</feature>
<feature type="binding site" evidence="1">
    <location>
        <position position="165"/>
    </location>
    <ligand>
        <name>anthranilate</name>
        <dbReference type="ChEBI" id="CHEBI:16567"/>
        <label>2</label>
    </ligand>
</feature>
<feature type="binding site" evidence="1">
    <location>
        <position position="224"/>
    </location>
    <ligand>
        <name>Mg(2+)</name>
        <dbReference type="ChEBI" id="CHEBI:18420"/>
        <label>2</label>
    </ligand>
</feature>
<feature type="binding site" evidence="1">
    <location>
        <position position="225"/>
    </location>
    <ligand>
        <name>Mg(2+)</name>
        <dbReference type="ChEBI" id="CHEBI:18420"/>
        <label>1</label>
    </ligand>
</feature>
<feature type="binding site" evidence="1">
    <location>
        <position position="225"/>
    </location>
    <ligand>
        <name>Mg(2+)</name>
        <dbReference type="ChEBI" id="CHEBI:18420"/>
        <label>2</label>
    </ligand>
</feature>
<keyword id="KW-0028">Amino-acid biosynthesis</keyword>
<keyword id="KW-0057">Aromatic amino acid biosynthesis</keyword>
<keyword id="KW-0328">Glycosyltransferase</keyword>
<keyword id="KW-0460">Magnesium</keyword>
<keyword id="KW-0479">Metal-binding</keyword>
<keyword id="KW-0808">Transferase</keyword>
<keyword id="KW-0822">Tryptophan biosynthesis</keyword>
<name>TRPD_METS3</name>
<gene>
    <name evidence="1" type="primary">trpD</name>
    <name type="ordered locus">Msm_1144</name>
</gene>